<feature type="chain" id="PRO_0000221962" description="RNA-directed RNA polymerase">
    <location>
        <begin position="1"/>
        <end position="878"/>
    </location>
</feature>
<feature type="domain" description="RdRp catalytic" evidence="3">
    <location>
        <begin position="397"/>
        <end position="597"/>
    </location>
</feature>
<feature type="region of interest" description="Disordered" evidence="4">
    <location>
        <begin position="845"/>
        <end position="878"/>
    </location>
</feature>
<feature type="binding site" evidence="2">
    <location>
        <begin position="258"/>
        <end position="265"/>
    </location>
    <ligand>
        <name>GTP</name>
        <dbReference type="ChEBI" id="CHEBI:37565"/>
    </ligand>
</feature>
<evidence type="ECO:0000250" key="1"/>
<evidence type="ECO:0000255" key="2"/>
<evidence type="ECO:0000255" key="3">
    <source>
        <dbReference type="PROSITE-ProRule" id="PRU00539"/>
    </source>
</evidence>
<evidence type="ECO:0000256" key="4">
    <source>
        <dbReference type="SAM" id="MobiDB-lite"/>
    </source>
</evidence>
<name>RDRP_IBDVA</name>
<organismHost>
    <name type="scientific">Gallus gallus</name>
    <name type="common">Chicken</name>
    <dbReference type="NCBI Taxonomy" id="9031"/>
</organismHost>
<organismHost>
    <name type="scientific">Meleagris gallopavo</name>
    <name type="common">Wild turkey</name>
    <dbReference type="NCBI Taxonomy" id="9103"/>
</organismHost>
<keyword id="KW-0191">Covalent protein-RNA linkage</keyword>
<keyword id="KW-0342">GTP-binding</keyword>
<keyword id="KW-0547">Nucleotide-binding</keyword>
<keyword id="KW-0548">Nucleotidyltransferase</keyword>
<keyword id="KW-0597">Phosphoprotein</keyword>
<keyword id="KW-0696">RNA-directed RNA polymerase</keyword>
<keyword id="KW-0808">Transferase</keyword>
<keyword id="KW-0693">Viral RNA replication</keyword>
<keyword id="KW-0946">Virion</keyword>
<reference key="1">
    <citation type="journal article" date="1988" name="Virology">
        <title>Sequence of the small double-stranded RNA genomic segment of infectious bursal disease virus and its deduced 90-kDa product.</title>
        <authorList>
            <person name="Morgan M.M."/>
            <person name="Macreadie I.G."/>
            <person name="Harley V.R."/>
            <person name="Hudson P.J."/>
            <person name="Azad A.A."/>
        </authorList>
    </citation>
    <scope>NUCLEOTIDE SEQUENCE [GENOMIC RNA]</scope>
</reference>
<organism>
    <name type="scientific">Avian infectious bursal disease virus (strain Australian 002-73)</name>
    <name type="common">IBDV</name>
    <name type="synonym">Gumboro disease virus</name>
    <dbReference type="NCBI Taxonomy" id="10997"/>
    <lineage>
        <taxon>Viruses</taxon>
        <taxon>Riboviria</taxon>
        <taxon>Orthornavirae</taxon>
        <taxon>Birnaviridae</taxon>
        <taxon>Avibirnavirus</taxon>
        <taxon>Avibirnavirus gumboroense</taxon>
    </lineage>
</organism>
<comment type="function">
    <text evidence="1">RNA-dependent RNA polymerase which is found both free and covalently attached to the genomic RNA. May also contain guanylyl and methyl transferase activities (By similarity).</text>
</comment>
<comment type="catalytic activity">
    <reaction evidence="3">
        <text>RNA(n) + a ribonucleoside 5'-triphosphate = RNA(n+1) + diphosphate</text>
        <dbReference type="Rhea" id="RHEA:21248"/>
        <dbReference type="Rhea" id="RHEA-COMP:14527"/>
        <dbReference type="Rhea" id="RHEA-COMP:17342"/>
        <dbReference type="ChEBI" id="CHEBI:33019"/>
        <dbReference type="ChEBI" id="CHEBI:61557"/>
        <dbReference type="ChEBI" id="CHEBI:140395"/>
        <dbReference type="EC" id="2.7.7.48"/>
    </reaction>
</comment>
<comment type="subunit">
    <text evidence="1">Interacts with VP3 in the cytoplasm.</text>
</comment>
<comment type="subcellular location">
    <subcellularLocation>
        <location evidence="1">Virion</location>
    </subcellularLocation>
    <text evidence="1">Minor amounts are incorporated in the virion.</text>
</comment>
<comment type="PTM">
    <text>May exist in multiple phosphorylated forms.</text>
</comment>
<dbReference type="EC" id="2.7.7.48"/>
<dbReference type="EMBL" id="M19336">
    <property type="protein sequence ID" value="AAA89177.1"/>
    <property type="molecule type" value="Genomic_RNA"/>
</dbReference>
<dbReference type="PIR" id="A28649">
    <property type="entry name" value="RRXSIB"/>
</dbReference>
<dbReference type="SMR" id="P12918"/>
<dbReference type="GO" id="GO:0044423">
    <property type="term" value="C:virion component"/>
    <property type="evidence" value="ECO:0007669"/>
    <property type="project" value="UniProtKB-KW"/>
</dbReference>
<dbReference type="GO" id="GO:0005525">
    <property type="term" value="F:GTP binding"/>
    <property type="evidence" value="ECO:0007669"/>
    <property type="project" value="UniProtKB-KW"/>
</dbReference>
<dbReference type="GO" id="GO:0003968">
    <property type="term" value="F:RNA-directed RNA polymerase activity"/>
    <property type="evidence" value="ECO:0007669"/>
    <property type="project" value="UniProtKB-KW"/>
</dbReference>
<dbReference type="GO" id="GO:0019079">
    <property type="term" value="P:viral genome replication"/>
    <property type="evidence" value="ECO:0007669"/>
    <property type="project" value="InterPro"/>
</dbReference>
<dbReference type="Gene3D" id="1.10.1740.80">
    <property type="match status" value="1"/>
</dbReference>
<dbReference type="Gene3D" id="6.10.140.300">
    <property type="match status" value="1"/>
</dbReference>
<dbReference type="Gene3D" id="3.90.1730.10">
    <property type="entry name" value="Infectious bursal virus vp1 polymerase domain"/>
    <property type="match status" value="3"/>
</dbReference>
<dbReference type="InterPro" id="IPR046814">
    <property type="entry name" value="Avibirnavurs_RdRp_C_sf"/>
</dbReference>
<dbReference type="InterPro" id="IPR046750">
    <property type="entry name" value="Birnavirus_RdRp_C"/>
</dbReference>
<dbReference type="InterPro" id="IPR007100">
    <property type="entry name" value="Birnavirus_RdRp_palm"/>
</dbReference>
<dbReference type="InterPro" id="IPR046812">
    <property type="entry name" value="Birnavirus_RdRp_palm_sf"/>
</dbReference>
<dbReference type="InterPro" id="IPR046752">
    <property type="entry name" value="Birnavirus_RdRp_thumb"/>
</dbReference>
<dbReference type="InterPro" id="IPR046813">
    <property type="entry name" value="Birnavirus_RdRp_thumb_sf"/>
</dbReference>
<dbReference type="InterPro" id="IPR043502">
    <property type="entry name" value="DNA/RNA_pol_sf"/>
</dbReference>
<dbReference type="Pfam" id="PF20489">
    <property type="entry name" value="Birna_RdRp_C"/>
    <property type="match status" value="1"/>
</dbReference>
<dbReference type="Pfam" id="PF04197">
    <property type="entry name" value="Birna_RdRp_palm"/>
    <property type="match status" value="1"/>
</dbReference>
<dbReference type="Pfam" id="PF20488">
    <property type="entry name" value="Birna_VP1_thumb"/>
    <property type="match status" value="1"/>
</dbReference>
<dbReference type="SUPFAM" id="SSF56672">
    <property type="entry name" value="DNA/RNA polymerases"/>
    <property type="match status" value="1"/>
</dbReference>
<dbReference type="PROSITE" id="PS50524">
    <property type="entry name" value="RDRP_DSRNA_BIR"/>
    <property type="match status" value="1"/>
</dbReference>
<accession>P12918</accession>
<proteinExistence type="inferred from homology"/>
<gene>
    <name type="primary">VP1</name>
</gene>
<sequence>MSDVFNSPQARTKISAAFGIKPTAGQDVEELLIPKVWVPPEDPLASPSRLAKFLRENGYKILQPRSLPENEEYETDQILPDLAWMRQIEGAVLKPTLSLHWGPRVLPKVLLNSPPEQGKAQCVPTRHCTTQADIYLFLQVPEATESLKDEVTLLTQNIRDKAYGSGTYMGQATRLVAMKEVATGRNPNKDPLKLGYTFESIAQLLDITLPVGPPGEDDKPWVPLTRVPSRMLVLTGDVDGDFEVEDYLPKINLKSSSGLPYVGRTKGETIGEMIAISNQFLRELSALLKQGAGTKGSNKKKLLSMLSDYWYLSCGLLFPKAERYDKSTWLTKTRNIWSAPSPTHLMISMITWPVMSNSPNNVLNIEGCPSLYKFNPFRGGLNRIVEWILAPEEPKALVYADNIYIVHSNTWYSIDLEKGEANCTRQHMQAAMYYILTRGWSDNGDPMFNQTWASFAMNIAPALVVDSSCLIMNLQIKSYGQGSGNAATFINNHLLSTLVLDQWNLMKQPNPDSEEFKSIEDKLGINFKIERSIDDIRGKLRQLVPLAQPGYLSGGVEPEQSSPTVELDLLGWSATYSKDLGIYVPVLDKERLFCSAAYPKGVENKSLKSKVGIEQAYKVVRYEALRLVGGWNYPLLNKACKNNASAARRHLEAKGFPLDEFLAEWSELSEFGETFEGFNIKLTVTRENLAELNKPVPPKPPNVNRPVNTGGLKAVSNALKTGRYRNEAGLSGLVLLATARSRLQDAVKAKAEAEKLHKSKPDDPDADWFERSETLSDLLEKADVASKVAHSALVETSDALEAVQSSSVYTPKYPEVKNPQTASNPVVGLHLPAKRATGVQAALLGAGTSRPMGMEAPTRSKNAVKMAKRAQRQKESRQ</sequence>
<protein>
    <recommendedName>
        <fullName>RNA-directed RNA polymerase</fullName>
        <shortName>RDRP</shortName>
        <ecNumber>2.7.7.48</ecNumber>
    </recommendedName>
    <alternativeName>
        <fullName>Protein VP1</fullName>
    </alternativeName>
</protein>